<evidence type="ECO:0000255" key="1">
    <source>
        <dbReference type="HAMAP-Rule" id="MF_00117"/>
    </source>
</evidence>
<organism>
    <name type="scientific">Caulobacter vibrioides (strain ATCC 19089 / CIP 103742 / CB 15)</name>
    <name type="common">Caulobacter crescentus</name>
    <dbReference type="NCBI Taxonomy" id="190650"/>
    <lineage>
        <taxon>Bacteria</taxon>
        <taxon>Pseudomonadati</taxon>
        <taxon>Pseudomonadota</taxon>
        <taxon>Alphaproteobacteria</taxon>
        <taxon>Caulobacterales</taxon>
        <taxon>Caulobacteraceae</taxon>
        <taxon>Caulobacter</taxon>
    </lineage>
</organism>
<sequence length="302" mass="32670">MTDIAPDTGVLDDVVSAFQIENLPVRGRVVRLGAAIDEVLTRHDYPEPVANLLGEACALAALVGSSLKFEGRLIVQAQGDGPVRYVVVDYDTSGGLRGYCRFDPEEVAAVSEGFVRPGAKTLLGGGVFIMTLDQGPDMDRYQGVTPIEGETLALCAEQYFAQSEQTPTRVRLAVGQADTGQGATWRAGGILIQVIAGDQARGETQDAWTHVQALFETTGEDELIDPTVSTPTLLWRLFNEDGVRLLDEKPLKAFCRCSEDRIGVVMDSFSAEEVAEMVEPDGKIHVTCEYCSRIYKLDPPGA</sequence>
<name>HSLO_CAUVC</name>
<feature type="chain" id="PRO_0000192168" description="33 kDa chaperonin">
    <location>
        <begin position="1"/>
        <end position="302"/>
    </location>
</feature>
<feature type="disulfide bond" description="Redox-active" evidence="1">
    <location>
        <begin position="255"/>
        <end position="257"/>
    </location>
</feature>
<feature type="disulfide bond" description="Redox-active" evidence="1">
    <location>
        <begin position="288"/>
        <end position="291"/>
    </location>
</feature>
<accession>P58097</accession>
<protein>
    <recommendedName>
        <fullName evidence="1">33 kDa chaperonin</fullName>
    </recommendedName>
    <alternativeName>
        <fullName evidence="1">Heat shock protein 33 homolog</fullName>
        <shortName evidence="1">HSP33</shortName>
    </alternativeName>
</protein>
<proteinExistence type="inferred from homology"/>
<comment type="function">
    <text evidence="1">Redox regulated molecular chaperone. Protects both thermally unfolding and oxidatively damaged proteins from irreversible aggregation. Plays an important role in the bacterial defense system toward oxidative stress.</text>
</comment>
<comment type="subcellular location">
    <subcellularLocation>
        <location evidence="1">Cytoplasm</location>
    </subcellularLocation>
</comment>
<comment type="PTM">
    <text evidence="1">Under oxidizing conditions two disulfide bonds are formed involving the reactive cysteines. Under reducing conditions zinc is bound to the reactive cysteines and the protein is inactive.</text>
</comment>
<comment type="similarity">
    <text evidence="1">Belongs to the HSP33 family.</text>
</comment>
<gene>
    <name evidence="1" type="primary">hslO</name>
    <name type="ordered locus">CC_2241</name>
</gene>
<dbReference type="EMBL" id="AE005673">
    <property type="protein sequence ID" value="AAK24212.1"/>
    <property type="molecule type" value="Genomic_DNA"/>
</dbReference>
<dbReference type="PIR" id="H87526">
    <property type="entry name" value="H87526"/>
</dbReference>
<dbReference type="RefSeq" id="NP_421044.1">
    <property type="nucleotide sequence ID" value="NC_002696.2"/>
</dbReference>
<dbReference type="RefSeq" id="WP_010920102.1">
    <property type="nucleotide sequence ID" value="NC_002696.2"/>
</dbReference>
<dbReference type="SMR" id="P58097"/>
<dbReference type="STRING" id="190650.CC_2241"/>
<dbReference type="EnsemblBacteria" id="AAK24212">
    <property type="protein sequence ID" value="AAK24212"/>
    <property type="gene ID" value="CC_2241"/>
</dbReference>
<dbReference type="KEGG" id="ccr:CC_2241"/>
<dbReference type="PATRIC" id="fig|190650.5.peg.2258"/>
<dbReference type="eggNOG" id="COG1281">
    <property type="taxonomic scope" value="Bacteria"/>
</dbReference>
<dbReference type="HOGENOM" id="CLU_054493_0_1_5"/>
<dbReference type="BioCyc" id="CAULO:CC2241-MONOMER"/>
<dbReference type="Proteomes" id="UP000001816">
    <property type="component" value="Chromosome"/>
</dbReference>
<dbReference type="GO" id="GO:0005737">
    <property type="term" value="C:cytoplasm"/>
    <property type="evidence" value="ECO:0007669"/>
    <property type="project" value="UniProtKB-SubCell"/>
</dbReference>
<dbReference type="GO" id="GO:0044183">
    <property type="term" value="F:protein folding chaperone"/>
    <property type="evidence" value="ECO:0007669"/>
    <property type="project" value="TreeGrafter"/>
</dbReference>
<dbReference type="GO" id="GO:0051082">
    <property type="term" value="F:unfolded protein binding"/>
    <property type="evidence" value="ECO:0007669"/>
    <property type="project" value="UniProtKB-UniRule"/>
</dbReference>
<dbReference type="GO" id="GO:0042026">
    <property type="term" value="P:protein refolding"/>
    <property type="evidence" value="ECO:0007669"/>
    <property type="project" value="TreeGrafter"/>
</dbReference>
<dbReference type="CDD" id="cd00498">
    <property type="entry name" value="Hsp33"/>
    <property type="match status" value="1"/>
</dbReference>
<dbReference type="Gene3D" id="1.10.287.480">
    <property type="entry name" value="helix hairpin bin"/>
    <property type="match status" value="1"/>
</dbReference>
<dbReference type="Gene3D" id="3.55.30.10">
    <property type="entry name" value="Hsp33 domain"/>
    <property type="match status" value="1"/>
</dbReference>
<dbReference type="Gene3D" id="3.90.1280.10">
    <property type="entry name" value="HSP33 redox switch-like"/>
    <property type="match status" value="1"/>
</dbReference>
<dbReference type="HAMAP" id="MF_00117">
    <property type="entry name" value="HslO"/>
    <property type="match status" value="1"/>
</dbReference>
<dbReference type="InterPro" id="IPR000397">
    <property type="entry name" value="Heat_shock_Hsp33"/>
</dbReference>
<dbReference type="InterPro" id="IPR016154">
    <property type="entry name" value="Heat_shock_Hsp33_C"/>
</dbReference>
<dbReference type="InterPro" id="IPR016153">
    <property type="entry name" value="Heat_shock_Hsp33_N"/>
</dbReference>
<dbReference type="InterPro" id="IPR023212">
    <property type="entry name" value="Hsp33_helix_hairpin_bin_dom_sf"/>
</dbReference>
<dbReference type="NCBIfam" id="NF002386">
    <property type="entry name" value="PRK01402.1"/>
    <property type="match status" value="1"/>
</dbReference>
<dbReference type="PANTHER" id="PTHR30111">
    <property type="entry name" value="33 KDA CHAPERONIN"/>
    <property type="match status" value="1"/>
</dbReference>
<dbReference type="PANTHER" id="PTHR30111:SF1">
    <property type="entry name" value="33 KDA CHAPERONIN"/>
    <property type="match status" value="1"/>
</dbReference>
<dbReference type="Pfam" id="PF01430">
    <property type="entry name" value="HSP33"/>
    <property type="match status" value="1"/>
</dbReference>
<dbReference type="PIRSF" id="PIRSF005261">
    <property type="entry name" value="Heat_shock_Hsp33"/>
    <property type="match status" value="1"/>
</dbReference>
<dbReference type="SUPFAM" id="SSF64397">
    <property type="entry name" value="Hsp33 domain"/>
    <property type="match status" value="1"/>
</dbReference>
<dbReference type="SUPFAM" id="SSF118352">
    <property type="entry name" value="HSP33 redox switch-like"/>
    <property type="match status" value="1"/>
</dbReference>
<keyword id="KW-0143">Chaperone</keyword>
<keyword id="KW-0963">Cytoplasm</keyword>
<keyword id="KW-1015">Disulfide bond</keyword>
<keyword id="KW-0676">Redox-active center</keyword>
<keyword id="KW-1185">Reference proteome</keyword>
<keyword id="KW-0862">Zinc</keyword>
<reference key="1">
    <citation type="journal article" date="2001" name="Proc. Natl. Acad. Sci. U.S.A.">
        <title>Complete genome sequence of Caulobacter crescentus.</title>
        <authorList>
            <person name="Nierman W.C."/>
            <person name="Feldblyum T.V."/>
            <person name="Laub M.T."/>
            <person name="Paulsen I.T."/>
            <person name="Nelson K.E."/>
            <person name="Eisen J.A."/>
            <person name="Heidelberg J.F."/>
            <person name="Alley M.R.K."/>
            <person name="Ohta N."/>
            <person name="Maddock J.R."/>
            <person name="Potocka I."/>
            <person name="Nelson W.C."/>
            <person name="Newton A."/>
            <person name="Stephens C."/>
            <person name="Phadke N.D."/>
            <person name="Ely B."/>
            <person name="DeBoy R.T."/>
            <person name="Dodson R.J."/>
            <person name="Durkin A.S."/>
            <person name="Gwinn M.L."/>
            <person name="Haft D.H."/>
            <person name="Kolonay J.F."/>
            <person name="Smit J."/>
            <person name="Craven M.B."/>
            <person name="Khouri H.M."/>
            <person name="Shetty J."/>
            <person name="Berry K.J."/>
            <person name="Utterback T.R."/>
            <person name="Tran K."/>
            <person name="Wolf A.M."/>
            <person name="Vamathevan J.J."/>
            <person name="Ermolaeva M.D."/>
            <person name="White O."/>
            <person name="Salzberg S.L."/>
            <person name="Venter J.C."/>
            <person name="Shapiro L."/>
            <person name="Fraser C.M."/>
        </authorList>
    </citation>
    <scope>NUCLEOTIDE SEQUENCE [LARGE SCALE GENOMIC DNA]</scope>
    <source>
        <strain>ATCC 19089 / CIP 103742 / CB 15</strain>
    </source>
</reference>